<protein>
    <recommendedName>
        <fullName>SH3 domain-binding glutamic acid-rich-like protein 3</fullName>
    </recommendedName>
</protein>
<name>SH3L3_PONAB</name>
<organism>
    <name type="scientific">Pongo abelii</name>
    <name type="common">Sumatran orangutan</name>
    <name type="synonym">Pongo pygmaeus abelii</name>
    <dbReference type="NCBI Taxonomy" id="9601"/>
    <lineage>
        <taxon>Eukaryota</taxon>
        <taxon>Metazoa</taxon>
        <taxon>Chordata</taxon>
        <taxon>Craniata</taxon>
        <taxon>Vertebrata</taxon>
        <taxon>Euteleostomi</taxon>
        <taxon>Mammalia</taxon>
        <taxon>Eutheria</taxon>
        <taxon>Euarchontoglires</taxon>
        <taxon>Primates</taxon>
        <taxon>Haplorrhini</taxon>
        <taxon>Catarrhini</taxon>
        <taxon>Hominidae</taxon>
        <taxon>Pongo</taxon>
    </lineage>
</organism>
<accession>Q5RC61</accession>
<evidence type="ECO:0000250" key="1">
    <source>
        <dbReference type="UniProtKB" id="Q91VW3"/>
    </source>
</evidence>
<evidence type="ECO:0000250" key="2">
    <source>
        <dbReference type="UniProtKB" id="Q9H299"/>
    </source>
</evidence>
<evidence type="ECO:0000255" key="3"/>
<evidence type="ECO:0000255" key="4">
    <source>
        <dbReference type="PROSITE-ProRule" id="PRU00686"/>
    </source>
</evidence>
<evidence type="ECO:0000305" key="5"/>
<sequence>MSGRRVYSTSVTGSREIKSQQSEVTRILDGKRIQYQLVDISQDNALRDEMRALAGNPKATPPQIVNGDQYCGDYELFVEAVEQNTLQEFLKLA</sequence>
<dbReference type="EMBL" id="CR858420">
    <property type="protein sequence ID" value="CAH90649.1"/>
    <property type="molecule type" value="mRNA"/>
</dbReference>
<dbReference type="RefSeq" id="NP_001125350.1">
    <property type="nucleotide sequence ID" value="NM_001131878.1"/>
</dbReference>
<dbReference type="BMRB" id="Q5RC61"/>
<dbReference type="SMR" id="Q5RC61"/>
<dbReference type="FunCoup" id="Q5RC61">
    <property type="interactions" value="481"/>
</dbReference>
<dbReference type="GeneID" id="100172252"/>
<dbReference type="KEGG" id="pon:100172252"/>
<dbReference type="CTD" id="83442"/>
<dbReference type="eggNOG" id="KOG4023">
    <property type="taxonomic scope" value="Eukaryota"/>
</dbReference>
<dbReference type="InParanoid" id="Q5RC61"/>
<dbReference type="OrthoDB" id="9932926at2759"/>
<dbReference type="Proteomes" id="UP000001595">
    <property type="component" value="Unplaced"/>
</dbReference>
<dbReference type="GO" id="GO:0005829">
    <property type="term" value="C:cytosol"/>
    <property type="evidence" value="ECO:0000250"/>
    <property type="project" value="UniProtKB"/>
</dbReference>
<dbReference type="GO" id="GO:0005634">
    <property type="term" value="C:nucleus"/>
    <property type="evidence" value="ECO:0007669"/>
    <property type="project" value="UniProtKB-SubCell"/>
</dbReference>
<dbReference type="GO" id="GO:0032587">
    <property type="term" value="C:ruffle membrane"/>
    <property type="evidence" value="ECO:0000250"/>
    <property type="project" value="UniProtKB"/>
</dbReference>
<dbReference type="GO" id="GO:0007010">
    <property type="term" value="P:cytoskeleton organization"/>
    <property type="evidence" value="ECO:0000250"/>
    <property type="project" value="UniProtKB"/>
</dbReference>
<dbReference type="CDD" id="cd03030">
    <property type="entry name" value="GRX_SH3BGR"/>
    <property type="match status" value="1"/>
</dbReference>
<dbReference type="FunFam" id="3.40.30.10:FF:000132">
    <property type="entry name" value="SH3 domain-binding glutamic acid-rich-like protein 3"/>
    <property type="match status" value="1"/>
</dbReference>
<dbReference type="Gene3D" id="3.40.30.10">
    <property type="entry name" value="Glutaredoxin"/>
    <property type="match status" value="1"/>
</dbReference>
<dbReference type="InterPro" id="IPR006993">
    <property type="entry name" value="Glut_rich_SH3-bd"/>
</dbReference>
<dbReference type="InterPro" id="IPR051033">
    <property type="entry name" value="SH3BGR"/>
</dbReference>
<dbReference type="InterPro" id="IPR036249">
    <property type="entry name" value="Thioredoxin-like_sf"/>
</dbReference>
<dbReference type="PANTHER" id="PTHR12232">
    <property type="entry name" value="SH3 DOMAIN-BINDING GLUTAMIC ACID-RICH-LIKE PROTEIN"/>
    <property type="match status" value="1"/>
</dbReference>
<dbReference type="PANTHER" id="PTHR12232:SF3">
    <property type="entry name" value="SH3 DOMAIN-BINDING GLUTAMIC ACID-RICH-LIKE PROTEIN 3"/>
    <property type="match status" value="1"/>
</dbReference>
<dbReference type="Pfam" id="PF04908">
    <property type="entry name" value="SH3BGR"/>
    <property type="match status" value="1"/>
</dbReference>
<dbReference type="SUPFAM" id="SSF52833">
    <property type="entry name" value="Thioredoxin-like"/>
    <property type="match status" value="1"/>
</dbReference>
<dbReference type="PROSITE" id="PS51354">
    <property type="entry name" value="GLUTAREDOXIN_2"/>
    <property type="match status" value="1"/>
</dbReference>
<reference key="1">
    <citation type="submission" date="2004-11" db="EMBL/GenBank/DDBJ databases">
        <authorList>
            <consortium name="The German cDNA consortium"/>
        </authorList>
    </citation>
    <scope>NUCLEOTIDE SEQUENCE [LARGE SCALE MRNA]</scope>
    <source>
        <tissue>Heart</tissue>
    </source>
</reference>
<feature type="initiator methionine" description="Removed" evidence="2">
    <location>
        <position position="1"/>
    </location>
</feature>
<feature type="chain" id="PRO_0000305926" description="SH3 domain-binding glutamic acid-rich-like protein 3">
    <location>
        <begin position="2"/>
        <end position="93"/>
    </location>
</feature>
<feature type="domain" description="Glutaredoxin" evidence="4">
    <location>
        <begin position="2"/>
        <end position="93"/>
    </location>
</feature>
<feature type="modified residue" description="N-acetylserine" evidence="2">
    <location>
        <position position="2"/>
    </location>
</feature>
<feature type="glycosylation site" description="O-linked (GalNAc...) serine" evidence="3">
    <location>
        <position position="2"/>
    </location>
</feature>
<feature type="glycosylation site" description="O-linked (GalNAc...) threonine" evidence="3">
    <location>
        <position position="9"/>
    </location>
</feature>
<feature type="glycosylation site" description="O-linked (GalNAc...) threonine" evidence="3">
    <location>
        <position position="12"/>
    </location>
</feature>
<comment type="function">
    <text evidence="2">Could act as a modulator of glutaredoxin biological activity (By similarity). May play a role in cytoskeleton organization (By similarity).</text>
</comment>
<comment type="subunit">
    <text evidence="1 2">Homodimer (By similarity). Interacts with MYO1C (via its IQ motifs); the interaction is dependent on calcium and takes place at membrane ruffles (By similarity).</text>
</comment>
<comment type="subcellular location">
    <subcellularLocation>
        <location evidence="2">Cytoplasm</location>
        <location evidence="2">Cytosol</location>
    </subcellularLocation>
    <subcellularLocation>
        <location evidence="2">Cell projection</location>
        <location evidence="2">Ruffle membrane</location>
    </subcellularLocation>
    <subcellularLocation>
        <location evidence="2">Nucleus</location>
    </subcellularLocation>
</comment>
<comment type="PTM">
    <text evidence="2">May be glycosylated.</text>
</comment>
<comment type="similarity">
    <text evidence="5">Belongs to the SH3BGR family.</text>
</comment>
<gene>
    <name type="primary">SH3BGRL3</name>
</gene>
<keyword id="KW-0007">Acetylation</keyword>
<keyword id="KW-1003">Cell membrane</keyword>
<keyword id="KW-0966">Cell projection</keyword>
<keyword id="KW-0963">Cytoplasm</keyword>
<keyword id="KW-0325">Glycoprotein</keyword>
<keyword id="KW-0472">Membrane</keyword>
<keyword id="KW-0539">Nucleus</keyword>
<keyword id="KW-1185">Reference proteome</keyword>
<proteinExistence type="inferred from homology"/>